<evidence type="ECO:0000255" key="1">
    <source>
        <dbReference type="HAMAP-Rule" id="MF_01815"/>
    </source>
</evidence>
<proteinExistence type="inferred from homology"/>
<comment type="function">
    <text evidence="1">Catalyzes the condensation reaction of fatty acid synthesis by the addition to an acyl acceptor of two carbons from malonyl-ACP. Catalyzes the first condensation reaction which initiates fatty acid synthesis and may therefore play a role in governing the total rate of fatty acid production. Possesses both acetoacetyl-ACP synthase and acetyl transacylase activities. Its substrate specificity determines the biosynthesis of branched-chain and/or straight-chain of fatty acids.</text>
</comment>
<comment type="catalytic activity">
    <reaction evidence="1">
        <text>malonyl-[ACP] + acetyl-CoA + H(+) = 3-oxobutanoyl-[ACP] + CO2 + CoA</text>
        <dbReference type="Rhea" id="RHEA:12080"/>
        <dbReference type="Rhea" id="RHEA-COMP:9623"/>
        <dbReference type="Rhea" id="RHEA-COMP:9625"/>
        <dbReference type="ChEBI" id="CHEBI:15378"/>
        <dbReference type="ChEBI" id="CHEBI:16526"/>
        <dbReference type="ChEBI" id="CHEBI:57287"/>
        <dbReference type="ChEBI" id="CHEBI:57288"/>
        <dbReference type="ChEBI" id="CHEBI:78449"/>
        <dbReference type="ChEBI" id="CHEBI:78450"/>
        <dbReference type="EC" id="2.3.1.180"/>
    </reaction>
</comment>
<comment type="pathway">
    <text evidence="1">Lipid metabolism; fatty acid biosynthesis.</text>
</comment>
<comment type="subunit">
    <text evidence="1">Homodimer.</text>
</comment>
<comment type="subcellular location">
    <subcellularLocation>
        <location evidence="1">Cytoplasm</location>
    </subcellularLocation>
</comment>
<comment type="domain">
    <text evidence="1">The last Arg residue of the ACP-binding site is essential for the weak association between ACP/AcpP and FabH.</text>
</comment>
<comment type="similarity">
    <text evidence="1">Belongs to the thiolase-like superfamily. FabH family.</text>
</comment>
<reference key="1">
    <citation type="journal article" date="2007" name="Science">
        <title>Legumes symbioses: absence of nod genes in photosynthetic bradyrhizobia.</title>
        <authorList>
            <person name="Giraud E."/>
            <person name="Moulin L."/>
            <person name="Vallenet D."/>
            <person name="Barbe V."/>
            <person name="Cytryn E."/>
            <person name="Avarre J.-C."/>
            <person name="Jaubert M."/>
            <person name="Simon D."/>
            <person name="Cartieaux F."/>
            <person name="Prin Y."/>
            <person name="Bena G."/>
            <person name="Hannibal L."/>
            <person name="Fardoux J."/>
            <person name="Kojadinovic M."/>
            <person name="Vuillet L."/>
            <person name="Lajus A."/>
            <person name="Cruveiller S."/>
            <person name="Rouy Z."/>
            <person name="Mangenot S."/>
            <person name="Segurens B."/>
            <person name="Dossat C."/>
            <person name="Franck W.L."/>
            <person name="Chang W.-S."/>
            <person name="Saunders E."/>
            <person name="Bruce D."/>
            <person name="Richardson P."/>
            <person name="Normand P."/>
            <person name="Dreyfus B."/>
            <person name="Pignol D."/>
            <person name="Stacey G."/>
            <person name="Emerich D."/>
            <person name="Vermeglio A."/>
            <person name="Medigue C."/>
            <person name="Sadowsky M."/>
        </authorList>
    </citation>
    <scope>NUCLEOTIDE SEQUENCE [LARGE SCALE GENOMIC DNA]</scope>
    <source>
        <strain>BTAi1 / ATCC BAA-1182</strain>
    </source>
</reference>
<organism>
    <name type="scientific">Bradyrhizobium sp. (strain BTAi1 / ATCC BAA-1182)</name>
    <dbReference type="NCBI Taxonomy" id="288000"/>
    <lineage>
        <taxon>Bacteria</taxon>
        <taxon>Pseudomonadati</taxon>
        <taxon>Pseudomonadota</taxon>
        <taxon>Alphaproteobacteria</taxon>
        <taxon>Hyphomicrobiales</taxon>
        <taxon>Nitrobacteraceae</taxon>
        <taxon>Bradyrhizobium</taxon>
    </lineage>
</organism>
<accession>A5EKG5</accession>
<gene>
    <name evidence="1" type="primary">fabH</name>
    <name type="ordered locus">BBta_4631</name>
</gene>
<dbReference type="EC" id="2.3.1.180" evidence="1"/>
<dbReference type="EMBL" id="CP000494">
    <property type="protein sequence ID" value="ABQ36659.1"/>
    <property type="molecule type" value="Genomic_DNA"/>
</dbReference>
<dbReference type="RefSeq" id="WP_012044649.1">
    <property type="nucleotide sequence ID" value="NC_009485.1"/>
</dbReference>
<dbReference type="SMR" id="A5EKG5"/>
<dbReference type="STRING" id="288000.BBta_4631"/>
<dbReference type="KEGG" id="bbt:BBta_4631"/>
<dbReference type="eggNOG" id="COG0332">
    <property type="taxonomic scope" value="Bacteria"/>
</dbReference>
<dbReference type="HOGENOM" id="CLU_039592_3_1_5"/>
<dbReference type="OrthoDB" id="9815506at2"/>
<dbReference type="UniPathway" id="UPA00094"/>
<dbReference type="Proteomes" id="UP000000246">
    <property type="component" value="Chromosome"/>
</dbReference>
<dbReference type="GO" id="GO:0005737">
    <property type="term" value="C:cytoplasm"/>
    <property type="evidence" value="ECO:0007669"/>
    <property type="project" value="UniProtKB-SubCell"/>
</dbReference>
<dbReference type="GO" id="GO:0004315">
    <property type="term" value="F:3-oxoacyl-[acyl-carrier-protein] synthase activity"/>
    <property type="evidence" value="ECO:0007669"/>
    <property type="project" value="InterPro"/>
</dbReference>
<dbReference type="GO" id="GO:0033818">
    <property type="term" value="F:beta-ketoacyl-acyl-carrier-protein synthase III activity"/>
    <property type="evidence" value="ECO:0007669"/>
    <property type="project" value="UniProtKB-UniRule"/>
</dbReference>
<dbReference type="GO" id="GO:0006633">
    <property type="term" value="P:fatty acid biosynthetic process"/>
    <property type="evidence" value="ECO:0007669"/>
    <property type="project" value="UniProtKB-UniRule"/>
</dbReference>
<dbReference type="CDD" id="cd00830">
    <property type="entry name" value="KAS_III"/>
    <property type="match status" value="1"/>
</dbReference>
<dbReference type="FunFam" id="3.40.47.10:FF:000004">
    <property type="entry name" value="3-oxoacyl-[acyl-carrier-protein] synthase 3"/>
    <property type="match status" value="1"/>
</dbReference>
<dbReference type="Gene3D" id="3.40.47.10">
    <property type="match status" value="1"/>
</dbReference>
<dbReference type="HAMAP" id="MF_01815">
    <property type="entry name" value="FabH"/>
    <property type="match status" value="1"/>
</dbReference>
<dbReference type="InterPro" id="IPR013747">
    <property type="entry name" value="ACP_syn_III_C"/>
</dbReference>
<dbReference type="InterPro" id="IPR013751">
    <property type="entry name" value="ACP_syn_III_N"/>
</dbReference>
<dbReference type="InterPro" id="IPR004655">
    <property type="entry name" value="FabH"/>
</dbReference>
<dbReference type="InterPro" id="IPR016039">
    <property type="entry name" value="Thiolase-like"/>
</dbReference>
<dbReference type="NCBIfam" id="TIGR00747">
    <property type="entry name" value="fabH"/>
    <property type="match status" value="1"/>
</dbReference>
<dbReference type="NCBIfam" id="NF006829">
    <property type="entry name" value="PRK09352.1"/>
    <property type="match status" value="1"/>
</dbReference>
<dbReference type="PANTHER" id="PTHR43091">
    <property type="entry name" value="3-OXOACYL-[ACYL-CARRIER-PROTEIN] SYNTHASE"/>
    <property type="match status" value="1"/>
</dbReference>
<dbReference type="PANTHER" id="PTHR43091:SF1">
    <property type="entry name" value="BETA-KETOACYL-[ACYL-CARRIER-PROTEIN] SYNTHASE III, CHLOROPLASTIC"/>
    <property type="match status" value="1"/>
</dbReference>
<dbReference type="Pfam" id="PF08545">
    <property type="entry name" value="ACP_syn_III"/>
    <property type="match status" value="1"/>
</dbReference>
<dbReference type="Pfam" id="PF08541">
    <property type="entry name" value="ACP_syn_III_C"/>
    <property type="match status" value="1"/>
</dbReference>
<dbReference type="SUPFAM" id="SSF53901">
    <property type="entry name" value="Thiolase-like"/>
    <property type="match status" value="1"/>
</dbReference>
<sequence length="324" mass="34545">MTIRSVVLGCGSYLPQRVVTNAELASRIETSDDWIVQRTGIRERHVAAEGEFTSHLAINAARAALAAADVDPQSIDLIVLGTSTPDNTFPATAVAVQDGLGIHHGAAFDLQAVCSGFVYALATADNFLRSGSFKRALVIGAETFSRILDWNDRTTCVLFGDGAGALVLDAQRQDGTSADRGVLTTHLRSDGRHKAKLYVDGGPSSTQTVGHLRMEGREVFKHAVGMITDVIVDAFEATGLSAETIDWFVPHQANKRIIDASAHKLHIAPEKVVLTVDRHGNTSAASIPLALDVAVKDGRIKKGDVVLLEAMGGGFTWGSALVRW</sequence>
<protein>
    <recommendedName>
        <fullName evidence="1">Beta-ketoacyl-[acyl-carrier-protein] synthase III</fullName>
        <shortName evidence="1">Beta-ketoacyl-ACP synthase III</shortName>
        <shortName evidence="1">KAS III</shortName>
        <ecNumber evidence="1">2.3.1.180</ecNumber>
    </recommendedName>
    <alternativeName>
        <fullName evidence="1">3-oxoacyl-[acyl-carrier-protein] synthase 3</fullName>
    </alternativeName>
    <alternativeName>
        <fullName evidence="1">3-oxoacyl-[acyl-carrier-protein] synthase III</fullName>
    </alternativeName>
</protein>
<name>FABH_BRASB</name>
<keyword id="KW-0012">Acyltransferase</keyword>
<keyword id="KW-0963">Cytoplasm</keyword>
<keyword id="KW-0275">Fatty acid biosynthesis</keyword>
<keyword id="KW-0276">Fatty acid metabolism</keyword>
<keyword id="KW-0444">Lipid biosynthesis</keyword>
<keyword id="KW-0443">Lipid metabolism</keyword>
<keyword id="KW-0511">Multifunctional enzyme</keyword>
<keyword id="KW-1185">Reference proteome</keyword>
<keyword id="KW-0808">Transferase</keyword>
<feature type="chain" id="PRO_1000056330" description="Beta-ketoacyl-[acyl-carrier-protein] synthase III">
    <location>
        <begin position="1"/>
        <end position="324"/>
    </location>
</feature>
<feature type="region of interest" description="ACP-binding" evidence="1">
    <location>
        <begin position="252"/>
        <end position="256"/>
    </location>
</feature>
<feature type="active site" evidence="1">
    <location>
        <position position="114"/>
    </location>
</feature>
<feature type="active site" evidence="1">
    <location>
        <position position="251"/>
    </location>
</feature>
<feature type="active site" evidence="1">
    <location>
        <position position="281"/>
    </location>
</feature>